<proteinExistence type="evidence at protein level"/>
<feature type="chain" id="PRO_0000321827" description="Testis-expressed protein 47">
    <location>
        <begin position="1"/>
        <end position="253"/>
    </location>
</feature>
<feature type="sequence variant" id="VAR_039351" description="In dbSNP:rs2373396.">
    <original>D</original>
    <variation>H</variation>
    <location>
        <position position="48"/>
    </location>
</feature>
<feature type="sequence variant" id="VAR_039352" description="In dbSNP:rs2293583.">
    <original>I</original>
    <variation>V</variation>
    <location>
        <position position="126"/>
    </location>
</feature>
<feature type="sequence variant" id="VAR_039353" description="In dbSNP:rs34276371.">
    <original>C</original>
    <variation>S</variation>
    <location>
        <position position="186"/>
    </location>
</feature>
<feature type="sequence variant" id="VAR_039355" description="In dbSNP:rs2373398.">
    <original>E</original>
    <variation>A</variation>
    <location>
        <position position="221"/>
    </location>
</feature>
<feature type="sequence variant" id="VAR_039354" description="In dbSNP:rs2373397.">
    <original>E</original>
    <variation>K</variation>
    <location>
        <position position="221"/>
    </location>
</feature>
<organism>
    <name type="scientific">Homo sapiens</name>
    <name type="common">Human</name>
    <dbReference type="NCBI Taxonomy" id="9606"/>
    <lineage>
        <taxon>Eukaryota</taxon>
        <taxon>Metazoa</taxon>
        <taxon>Chordata</taxon>
        <taxon>Craniata</taxon>
        <taxon>Vertebrata</taxon>
        <taxon>Euteleostomi</taxon>
        <taxon>Mammalia</taxon>
        <taxon>Eutheria</taxon>
        <taxon>Euarchontoglires</taxon>
        <taxon>Primates</taxon>
        <taxon>Haplorrhini</taxon>
        <taxon>Catarrhini</taxon>
        <taxon>Hominidae</taxon>
        <taxon>Homo</taxon>
    </lineage>
</organism>
<dbReference type="EMBL" id="AC002127">
    <property type="status" value="NOT_ANNOTATED_CDS"/>
    <property type="molecule type" value="Genomic_DNA"/>
</dbReference>
<dbReference type="EMBL" id="CH236949">
    <property type="protein sequence ID" value="EAL24169.1"/>
    <property type="molecule type" value="Genomic_DNA"/>
</dbReference>
<dbReference type="EMBL" id="CH471091">
    <property type="protein sequence ID" value="EAW76902.1"/>
    <property type="molecule type" value="Genomic_DNA"/>
</dbReference>
<dbReference type="EMBL" id="BC028365">
    <property type="protein sequence ID" value="AAH28365.1"/>
    <property type="molecule type" value="mRNA"/>
</dbReference>
<dbReference type="CCDS" id="CCDS34678.1"/>
<dbReference type="RefSeq" id="NP_689919.1">
    <property type="nucleotide sequence ID" value="NM_152706.4"/>
</dbReference>
<dbReference type="RefSeq" id="XP_011514206.1">
    <property type="nucleotide sequence ID" value="XM_011515904.2"/>
</dbReference>
<dbReference type="SMR" id="Q8TBZ9"/>
<dbReference type="BioGRID" id="128554">
    <property type="interactions" value="1"/>
</dbReference>
<dbReference type="FunCoup" id="Q8TBZ9">
    <property type="interactions" value="1"/>
</dbReference>
<dbReference type="IntAct" id="Q8TBZ9">
    <property type="interactions" value="1"/>
</dbReference>
<dbReference type="STRING" id="9606.ENSP00000297203"/>
<dbReference type="GlyGen" id="Q8TBZ9">
    <property type="glycosylation" value="1 site, 1 O-linked glycan (1 site)"/>
</dbReference>
<dbReference type="iPTMnet" id="Q8TBZ9"/>
<dbReference type="PhosphoSitePlus" id="Q8TBZ9"/>
<dbReference type="BioMuta" id="TEX47"/>
<dbReference type="DMDM" id="74730535"/>
<dbReference type="jPOST" id="Q8TBZ9"/>
<dbReference type="MassIVE" id="Q8TBZ9"/>
<dbReference type="PaxDb" id="9606-ENSP00000297203"/>
<dbReference type="PeptideAtlas" id="Q8TBZ9"/>
<dbReference type="ProteomicsDB" id="74063"/>
<dbReference type="Antibodypedia" id="15398">
    <property type="antibodies" value="52 antibodies from 15 providers"/>
</dbReference>
<dbReference type="DNASU" id="219557"/>
<dbReference type="Ensembl" id="ENST00000297203.3">
    <property type="protein sequence ID" value="ENSP00000297203.2"/>
    <property type="gene ID" value="ENSG00000164645.3"/>
</dbReference>
<dbReference type="GeneID" id="219557"/>
<dbReference type="KEGG" id="hsa:219557"/>
<dbReference type="MANE-Select" id="ENST00000297203.3">
    <property type="protein sequence ID" value="ENSP00000297203.2"/>
    <property type="RefSeq nucleotide sequence ID" value="NM_152706.4"/>
    <property type="RefSeq protein sequence ID" value="NP_689919.1"/>
</dbReference>
<dbReference type="UCSC" id="uc003ujv.4">
    <property type="organism name" value="human"/>
</dbReference>
<dbReference type="AGR" id="HGNC:22402"/>
<dbReference type="CTD" id="219557"/>
<dbReference type="DisGeNET" id="219557"/>
<dbReference type="GeneCards" id="TEX47"/>
<dbReference type="HGNC" id="HGNC:22402">
    <property type="gene designation" value="TEX47"/>
</dbReference>
<dbReference type="HPA" id="ENSG00000164645">
    <property type="expression patterns" value="Tissue enriched (testis)"/>
</dbReference>
<dbReference type="neXtProt" id="NX_Q8TBZ9"/>
<dbReference type="OpenTargets" id="ENSG00000164645"/>
<dbReference type="PharmGKB" id="PA162380726"/>
<dbReference type="VEuPathDB" id="HostDB:ENSG00000164645"/>
<dbReference type="eggNOG" id="ENOG502RYKR">
    <property type="taxonomic scope" value="Eukaryota"/>
</dbReference>
<dbReference type="GeneTree" id="ENSGT00390000005565"/>
<dbReference type="HOGENOM" id="CLU_089495_0_0_1"/>
<dbReference type="InParanoid" id="Q8TBZ9"/>
<dbReference type="OMA" id="RLFMQWY"/>
<dbReference type="OrthoDB" id="548795at2759"/>
<dbReference type="PAN-GO" id="Q8TBZ9">
    <property type="GO annotations" value="0 GO annotations based on evolutionary models"/>
</dbReference>
<dbReference type="PhylomeDB" id="Q8TBZ9"/>
<dbReference type="TreeFam" id="TF329731"/>
<dbReference type="PathwayCommons" id="Q8TBZ9"/>
<dbReference type="SignaLink" id="Q8TBZ9"/>
<dbReference type="BioGRID-ORCS" id="219557">
    <property type="hits" value="11 hits in 1125 CRISPR screens"/>
</dbReference>
<dbReference type="GenomeRNAi" id="219557"/>
<dbReference type="Pharos" id="Q8TBZ9">
    <property type="development level" value="Tdark"/>
</dbReference>
<dbReference type="PRO" id="PR:Q8TBZ9"/>
<dbReference type="Proteomes" id="UP000005640">
    <property type="component" value="Chromosome 7"/>
</dbReference>
<dbReference type="RNAct" id="Q8TBZ9">
    <property type="molecule type" value="protein"/>
</dbReference>
<dbReference type="Bgee" id="ENSG00000164645">
    <property type="expression patterns" value="Expressed in sperm and 30 other cell types or tissues"/>
</dbReference>
<dbReference type="InterPro" id="IPR055308">
    <property type="entry name" value="TEX47-like"/>
</dbReference>
<dbReference type="PANTHER" id="PTHR34035">
    <property type="entry name" value="TESTIS-EXPRESSED PROTEIN 47"/>
    <property type="match status" value="1"/>
</dbReference>
<dbReference type="PANTHER" id="PTHR34035:SF1">
    <property type="entry name" value="TESTIS-EXPRESSED PROTEIN 47"/>
    <property type="match status" value="1"/>
</dbReference>
<dbReference type="Pfam" id="PF24787">
    <property type="entry name" value="TEX47"/>
    <property type="match status" value="1"/>
</dbReference>
<accession>Q8TBZ9</accession>
<name>TEX47_HUMAN</name>
<evidence type="ECO:0000305" key="1"/>
<evidence type="ECO:0000312" key="2">
    <source>
        <dbReference type="HGNC" id="HGNC:22402"/>
    </source>
</evidence>
<protein>
    <recommendedName>
        <fullName>Testis-expressed protein 47</fullName>
    </recommendedName>
</protein>
<keyword id="KW-1267">Proteomics identification</keyword>
<keyword id="KW-1185">Reference proteome</keyword>
<gene>
    <name evidence="2" type="primary">TEX47</name>
    <name type="synonym">C7orf62</name>
</gene>
<reference key="1">
    <citation type="journal article" date="2003" name="Nature">
        <title>The DNA sequence of human chromosome 7.</title>
        <authorList>
            <person name="Hillier L.W."/>
            <person name="Fulton R.S."/>
            <person name="Fulton L.A."/>
            <person name="Graves T.A."/>
            <person name="Pepin K.H."/>
            <person name="Wagner-McPherson C."/>
            <person name="Layman D."/>
            <person name="Maas J."/>
            <person name="Jaeger S."/>
            <person name="Walker R."/>
            <person name="Wylie K."/>
            <person name="Sekhon M."/>
            <person name="Becker M.C."/>
            <person name="O'Laughlin M.D."/>
            <person name="Schaller M.E."/>
            <person name="Fewell G.A."/>
            <person name="Delehaunty K.D."/>
            <person name="Miner T.L."/>
            <person name="Nash W.E."/>
            <person name="Cordes M."/>
            <person name="Du H."/>
            <person name="Sun H."/>
            <person name="Edwards J."/>
            <person name="Bradshaw-Cordum H."/>
            <person name="Ali J."/>
            <person name="Andrews S."/>
            <person name="Isak A."/>
            <person name="Vanbrunt A."/>
            <person name="Nguyen C."/>
            <person name="Du F."/>
            <person name="Lamar B."/>
            <person name="Courtney L."/>
            <person name="Kalicki J."/>
            <person name="Ozersky P."/>
            <person name="Bielicki L."/>
            <person name="Scott K."/>
            <person name="Holmes A."/>
            <person name="Harkins R."/>
            <person name="Harris A."/>
            <person name="Strong C.M."/>
            <person name="Hou S."/>
            <person name="Tomlinson C."/>
            <person name="Dauphin-Kohlberg S."/>
            <person name="Kozlowicz-Reilly A."/>
            <person name="Leonard S."/>
            <person name="Rohlfing T."/>
            <person name="Rock S.M."/>
            <person name="Tin-Wollam A.-M."/>
            <person name="Abbott A."/>
            <person name="Minx P."/>
            <person name="Maupin R."/>
            <person name="Strowmatt C."/>
            <person name="Latreille P."/>
            <person name="Miller N."/>
            <person name="Johnson D."/>
            <person name="Murray J."/>
            <person name="Woessner J.P."/>
            <person name="Wendl M.C."/>
            <person name="Yang S.-P."/>
            <person name="Schultz B.R."/>
            <person name="Wallis J.W."/>
            <person name="Spieth J."/>
            <person name="Bieri T.A."/>
            <person name="Nelson J.O."/>
            <person name="Berkowicz N."/>
            <person name="Wohldmann P.E."/>
            <person name="Cook L.L."/>
            <person name="Hickenbotham M.T."/>
            <person name="Eldred J."/>
            <person name="Williams D."/>
            <person name="Bedell J.A."/>
            <person name="Mardis E.R."/>
            <person name="Clifton S.W."/>
            <person name="Chissoe S.L."/>
            <person name="Marra M.A."/>
            <person name="Raymond C."/>
            <person name="Haugen E."/>
            <person name="Gillett W."/>
            <person name="Zhou Y."/>
            <person name="James R."/>
            <person name="Phelps K."/>
            <person name="Iadanoto S."/>
            <person name="Bubb K."/>
            <person name="Simms E."/>
            <person name="Levy R."/>
            <person name="Clendenning J."/>
            <person name="Kaul R."/>
            <person name="Kent W.J."/>
            <person name="Furey T.S."/>
            <person name="Baertsch R.A."/>
            <person name="Brent M.R."/>
            <person name="Keibler E."/>
            <person name="Flicek P."/>
            <person name="Bork P."/>
            <person name="Suyama M."/>
            <person name="Bailey J.A."/>
            <person name="Portnoy M.E."/>
            <person name="Torrents D."/>
            <person name="Chinwalla A.T."/>
            <person name="Gish W.R."/>
            <person name="Eddy S.R."/>
            <person name="McPherson J.D."/>
            <person name="Olson M.V."/>
            <person name="Eichler E.E."/>
            <person name="Green E.D."/>
            <person name="Waterston R.H."/>
            <person name="Wilson R.K."/>
        </authorList>
    </citation>
    <scope>NUCLEOTIDE SEQUENCE [LARGE SCALE GENOMIC DNA]</scope>
</reference>
<reference key="2">
    <citation type="journal article" date="2003" name="Science">
        <title>Human chromosome 7: DNA sequence and biology.</title>
        <authorList>
            <person name="Scherer S.W."/>
            <person name="Cheung J."/>
            <person name="MacDonald J.R."/>
            <person name="Osborne L.R."/>
            <person name="Nakabayashi K."/>
            <person name="Herbrick J.-A."/>
            <person name="Carson A.R."/>
            <person name="Parker-Katiraee L."/>
            <person name="Skaug J."/>
            <person name="Khaja R."/>
            <person name="Zhang J."/>
            <person name="Hudek A.K."/>
            <person name="Li M."/>
            <person name="Haddad M."/>
            <person name="Duggan G.E."/>
            <person name="Fernandez B.A."/>
            <person name="Kanematsu E."/>
            <person name="Gentles S."/>
            <person name="Christopoulos C.C."/>
            <person name="Choufani S."/>
            <person name="Kwasnicka D."/>
            <person name="Zheng X.H."/>
            <person name="Lai Z."/>
            <person name="Nusskern D.R."/>
            <person name="Zhang Q."/>
            <person name="Gu Z."/>
            <person name="Lu F."/>
            <person name="Zeesman S."/>
            <person name="Nowaczyk M.J."/>
            <person name="Teshima I."/>
            <person name="Chitayat D."/>
            <person name="Shuman C."/>
            <person name="Weksberg R."/>
            <person name="Zackai E.H."/>
            <person name="Grebe T.A."/>
            <person name="Cox S.R."/>
            <person name="Kirkpatrick S.J."/>
            <person name="Rahman N."/>
            <person name="Friedman J.M."/>
            <person name="Heng H.H.Q."/>
            <person name="Pelicci P.G."/>
            <person name="Lo-Coco F."/>
            <person name="Belloni E."/>
            <person name="Shaffer L.G."/>
            <person name="Pober B."/>
            <person name="Morton C.C."/>
            <person name="Gusella J.F."/>
            <person name="Bruns G.A.P."/>
            <person name="Korf B.R."/>
            <person name="Quade B.J."/>
            <person name="Ligon A.H."/>
            <person name="Ferguson H."/>
            <person name="Higgins A.W."/>
            <person name="Leach N.T."/>
            <person name="Herrick S.R."/>
            <person name="Lemyre E."/>
            <person name="Farra C.G."/>
            <person name="Kim H.-G."/>
            <person name="Summers A.M."/>
            <person name="Gripp K.W."/>
            <person name="Roberts W."/>
            <person name="Szatmari P."/>
            <person name="Winsor E.J.T."/>
            <person name="Grzeschik K.-H."/>
            <person name="Teebi A."/>
            <person name="Minassian B.A."/>
            <person name="Kere J."/>
            <person name="Armengol L."/>
            <person name="Pujana M.A."/>
            <person name="Estivill X."/>
            <person name="Wilson M.D."/>
            <person name="Koop B.F."/>
            <person name="Tosi S."/>
            <person name="Moore G.E."/>
            <person name="Boright A.P."/>
            <person name="Zlotorynski E."/>
            <person name="Kerem B."/>
            <person name="Kroisel P.M."/>
            <person name="Petek E."/>
            <person name="Oscier D.G."/>
            <person name="Mould S.J."/>
            <person name="Doehner H."/>
            <person name="Doehner K."/>
            <person name="Rommens J.M."/>
            <person name="Vincent J.B."/>
            <person name="Venter J.C."/>
            <person name="Li P.W."/>
            <person name="Mural R.J."/>
            <person name="Adams M.D."/>
            <person name="Tsui L.-C."/>
        </authorList>
    </citation>
    <scope>NUCLEOTIDE SEQUENCE [LARGE SCALE GENOMIC DNA]</scope>
</reference>
<reference key="3">
    <citation type="submission" date="2005-09" db="EMBL/GenBank/DDBJ databases">
        <authorList>
            <person name="Mural R.J."/>
            <person name="Istrail S."/>
            <person name="Sutton G.G."/>
            <person name="Florea L."/>
            <person name="Halpern A.L."/>
            <person name="Mobarry C.M."/>
            <person name="Lippert R."/>
            <person name="Walenz B."/>
            <person name="Shatkay H."/>
            <person name="Dew I."/>
            <person name="Miller J.R."/>
            <person name="Flanigan M.J."/>
            <person name="Edwards N.J."/>
            <person name="Bolanos R."/>
            <person name="Fasulo D."/>
            <person name="Halldorsson B.V."/>
            <person name="Hannenhalli S."/>
            <person name="Turner R."/>
            <person name="Yooseph S."/>
            <person name="Lu F."/>
            <person name="Nusskern D.R."/>
            <person name="Shue B.C."/>
            <person name="Zheng X.H."/>
            <person name="Zhong F."/>
            <person name="Delcher A.L."/>
            <person name="Huson D.H."/>
            <person name="Kravitz S.A."/>
            <person name="Mouchard L."/>
            <person name="Reinert K."/>
            <person name="Remington K.A."/>
            <person name="Clark A.G."/>
            <person name="Waterman M.S."/>
            <person name="Eichler E.E."/>
            <person name="Adams M.D."/>
            <person name="Hunkapiller M.W."/>
            <person name="Myers E.W."/>
            <person name="Venter J.C."/>
        </authorList>
    </citation>
    <scope>NUCLEOTIDE SEQUENCE [LARGE SCALE GENOMIC DNA]</scope>
</reference>
<reference key="4">
    <citation type="journal article" date="2004" name="Genome Res.">
        <title>The status, quality, and expansion of the NIH full-length cDNA project: the Mammalian Gene Collection (MGC).</title>
        <authorList>
            <consortium name="The MGC Project Team"/>
        </authorList>
    </citation>
    <scope>NUCLEOTIDE SEQUENCE [LARGE SCALE MRNA]</scope>
    <source>
        <tissue>Testis</tissue>
    </source>
</reference>
<comment type="interaction">
    <interactant intactId="EBI-12261204">
        <id>Q8TBZ9</id>
    </interactant>
    <interactant intactId="EBI-16439278">
        <id>Q6FHY5</id>
        <label>MEOX2</label>
    </interactant>
    <organismsDiffer>false</organismsDiffer>
    <experiments>3</experiments>
</comment>
<comment type="tissue specificity">
    <text evidence="1">Testis-specific.</text>
</comment>
<sequence length="253" mass="29483">MSFSVHNQKGSKRPLPLEPLLFLQVPRSNYLHFQEEKQRLHLKKFLLDRMFLVAKIQANVERKDVADYYEQMFQSVLKHHLGEAVTGLLLIYPTSILHILESSSDTLYKVLLDYIGHVKDETVFFIQQMKIIVISHNIPMRLFMQWHVSVIKVPVMYLDDVTQSQSLKEVITDFLTQTHKLSLYLCQTMKVGTKGPGDNLHQVAPDLLLPEQIIKYLCKSEEFMDPATFINMYNRPIHITLDSEVVWPAPSRF</sequence>